<dbReference type="EMBL" id="CP000792">
    <property type="protein sequence ID" value="EAT98133.1"/>
    <property type="molecule type" value="Genomic_DNA"/>
</dbReference>
<dbReference type="RefSeq" id="WP_002941501.1">
    <property type="nucleotide sequence ID" value="NC_009802.2"/>
</dbReference>
<dbReference type="SMR" id="A7ZFY8"/>
<dbReference type="STRING" id="360104.CCC13826_1752"/>
<dbReference type="KEGG" id="cco:CCC13826_1752"/>
<dbReference type="eggNOG" id="COG0522">
    <property type="taxonomic scope" value="Bacteria"/>
</dbReference>
<dbReference type="HOGENOM" id="CLU_092403_0_2_7"/>
<dbReference type="OrthoDB" id="9803672at2"/>
<dbReference type="Proteomes" id="UP000001121">
    <property type="component" value="Chromosome"/>
</dbReference>
<dbReference type="GO" id="GO:0015935">
    <property type="term" value="C:small ribosomal subunit"/>
    <property type="evidence" value="ECO:0007669"/>
    <property type="project" value="InterPro"/>
</dbReference>
<dbReference type="GO" id="GO:0019843">
    <property type="term" value="F:rRNA binding"/>
    <property type="evidence" value="ECO:0007669"/>
    <property type="project" value="UniProtKB-UniRule"/>
</dbReference>
<dbReference type="GO" id="GO:0003735">
    <property type="term" value="F:structural constituent of ribosome"/>
    <property type="evidence" value="ECO:0007669"/>
    <property type="project" value="InterPro"/>
</dbReference>
<dbReference type="GO" id="GO:0042274">
    <property type="term" value="P:ribosomal small subunit biogenesis"/>
    <property type="evidence" value="ECO:0007669"/>
    <property type="project" value="TreeGrafter"/>
</dbReference>
<dbReference type="GO" id="GO:0006412">
    <property type="term" value="P:translation"/>
    <property type="evidence" value="ECO:0007669"/>
    <property type="project" value="UniProtKB-UniRule"/>
</dbReference>
<dbReference type="CDD" id="cd00165">
    <property type="entry name" value="S4"/>
    <property type="match status" value="1"/>
</dbReference>
<dbReference type="FunFam" id="1.10.1050.10:FF:000001">
    <property type="entry name" value="30S ribosomal protein S4"/>
    <property type="match status" value="1"/>
</dbReference>
<dbReference type="FunFam" id="3.10.290.10:FF:000001">
    <property type="entry name" value="30S ribosomal protein S4"/>
    <property type="match status" value="1"/>
</dbReference>
<dbReference type="Gene3D" id="1.10.1050.10">
    <property type="entry name" value="Ribosomal Protein S4 Delta 41, Chain A, domain 1"/>
    <property type="match status" value="1"/>
</dbReference>
<dbReference type="Gene3D" id="3.10.290.10">
    <property type="entry name" value="RNA-binding S4 domain"/>
    <property type="match status" value="1"/>
</dbReference>
<dbReference type="HAMAP" id="MF_01306_B">
    <property type="entry name" value="Ribosomal_uS4_B"/>
    <property type="match status" value="1"/>
</dbReference>
<dbReference type="InterPro" id="IPR022801">
    <property type="entry name" value="Ribosomal_uS4"/>
</dbReference>
<dbReference type="InterPro" id="IPR005709">
    <property type="entry name" value="Ribosomal_uS4_bac-type"/>
</dbReference>
<dbReference type="InterPro" id="IPR018079">
    <property type="entry name" value="Ribosomal_uS4_CS"/>
</dbReference>
<dbReference type="InterPro" id="IPR001912">
    <property type="entry name" value="Ribosomal_uS4_N"/>
</dbReference>
<dbReference type="InterPro" id="IPR002942">
    <property type="entry name" value="S4_RNA-bd"/>
</dbReference>
<dbReference type="InterPro" id="IPR036986">
    <property type="entry name" value="S4_RNA-bd_sf"/>
</dbReference>
<dbReference type="NCBIfam" id="NF003717">
    <property type="entry name" value="PRK05327.1"/>
    <property type="match status" value="1"/>
</dbReference>
<dbReference type="NCBIfam" id="TIGR01017">
    <property type="entry name" value="rpsD_bact"/>
    <property type="match status" value="1"/>
</dbReference>
<dbReference type="PANTHER" id="PTHR11831">
    <property type="entry name" value="30S 40S RIBOSOMAL PROTEIN"/>
    <property type="match status" value="1"/>
</dbReference>
<dbReference type="PANTHER" id="PTHR11831:SF4">
    <property type="entry name" value="SMALL RIBOSOMAL SUBUNIT PROTEIN US4M"/>
    <property type="match status" value="1"/>
</dbReference>
<dbReference type="Pfam" id="PF00163">
    <property type="entry name" value="Ribosomal_S4"/>
    <property type="match status" value="1"/>
</dbReference>
<dbReference type="Pfam" id="PF01479">
    <property type="entry name" value="S4"/>
    <property type="match status" value="1"/>
</dbReference>
<dbReference type="SMART" id="SM01390">
    <property type="entry name" value="Ribosomal_S4"/>
    <property type="match status" value="1"/>
</dbReference>
<dbReference type="SMART" id="SM00363">
    <property type="entry name" value="S4"/>
    <property type="match status" value="1"/>
</dbReference>
<dbReference type="SUPFAM" id="SSF55174">
    <property type="entry name" value="Alpha-L RNA-binding motif"/>
    <property type="match status" value="1"/>
</dbReference>
<dbReference type="PROSITE" id="PS00632">
    <property type="entry name" value="RIBOSOMAL_S4"/>
    <property type="match status" value="1"/>
</dbReference>
<dbReference type="PROSITE" id="PS50889">
    <property type="entry name" value="S4"/>
    <property type="match status" value="1"/>
</dbReference>
<feature type="chain" id="PRO_0000322279" description="Small ribosomal subunit protein uS4">
    <location>
        <begin position="1"/>
        <end position="208"/>
    </location>
</feature>
<feature type="domain" description="S4 RNA-binding" evidence="1">
    <location>
        <begin position="98"/>
        <end position="161"/>
    </location>
</feature>
<reference key="1">
    <citation type="submission" date="2007-10" db="EMBL/GenBank/DDBJ databases">
        <title>Genome sequence of Campylobacter concisus 13826 isolated from human feces.</title>
        <authorList>
            <person name="Fouts D.E."/>
            <person name="Mongodin E.F."/>
            <person name="Puiu D."/>
            <person name="Sebastian Y."/>
            <person name="Miller W.G."/>
            <person name="Mandrell R.E."/>
            <person name="On S."/>
            <person name="Nelson K.E."/>
        </authorList>
    </citation>
    <scope>NUCLEOTIDE SEQUENCE [LARGE SCALE GENOMIC DNA]</scope>
    <source>
        <strain>13826</strain>
    </source>
</reference>
<organism>
    <name type="scientific">Campylobacter concisus (strain 13826)</name>
    <dbReference type="NCBI Taxonomy" id="360104"/>
    <lineage>
        <taxon>Bacteria</taxon>
        <taxon>Pseudomonadati</taxon>
        <taxon>Campylobacterota</taxon>
        <taxon>Epsilonproteobacteria</taxon>
        <taxon>Campylobacterales</taxon>
        <taxon>Campylobacteraceae</taxon>
        <taxon>Campylobacter</taxon>
    </lineage>
</organism>
<protein>
    <recommendedName>
        <fullName evidence="1">Small ribosomal subunit protein uS4</fullName>
    </recommendedName>
    <alternativeName>
        <fullName evidence="2">30S ribosomal protein S4</fullName>
    </alternativeName>
</protein>
<accession>A7ZFY8</accession>
<proteinExistence type="inferred from homology"/>
<keyword id="KW-0687">Ribonucleoprotein</keyword>
<keyword id="KW-0689">Ribosomal protein</keyword>
<keyword id="KW-0694">RNA-binding</keyword>
<keyword id="KW-0699">rRNA-binding</keyword>
<name>RS4_CAMC1</name>
<gene>
    <name evidence="1" type="primary">rpsD</name>
    <name type="ordered locus">Ccon26_18610</name>
    <name type="ORF">CCC13826_1752</name>
</gene>
<sequence length="208" mass="23907">MARYTGPVEKLERRLGVSLALKGERRLAGKSALEKRPYAPGQHGQRRAKISEYGLQLREKQKAKFMYGVSEKQFRRLFQEAARREGNTGALLVQLLEQRLDNVVYRMGFATTRRFARQLVTHGHILVNGKRVDIPSYRVEPGSKVEVAEKSKNNPQIVRAIDLTAQTGIVAWVDVEKEKKFGIFTRNPEREEVIIPVEERFIVELYSK</sequence>
<comment type="function">
    <text evidence="1">One of the primary rRNA binding proteins, it binds directly to 16S rRNA where it nucleates assembly of the body of the 30S subunit.</text>
</comment>
<comment type="function">
    <text evidence="1">With S5 and S12 plays an important role in translational accuracy.</text>
</comment>
<comment type="subunit">
    <text evidence="1">Part of the 30S ribosomal subunit. Contacts protein S5. The interaction surface between S4 and S5 is involved in control of translational fidelity.</text>
</comment>
<comment type="similarity">
    <text evidence="1">Belongs to the universal ribosomal protein uS4 family.</text>
</comment>
<evidence type="ECO:0000255" key="1">
    <source>
        <dbReference type="HAMAP-Rule" id="MF_01306"/>
    </source>
</evidence>
<evidence type="ECO:0000305" key="2"/>